<feature type="chain" id="PRO_1000149843" description="tRNA pseudouridine synthase D">
    <location>
        <begin position="1"/>
        <end position="349"/>
    </location>
</feature>
<feature type="domain" description="TRUD" evidence="1">
    <location>
        <begin position="155"/>
        <end position="303"/>
    </location>
</feature>
<feature type="active site" description="Nucleophile" evidence="1">
    <location>
        <position position="80"/>
    </location>
</feature>
<feature type="binding site" evidence="1">
    <location>
        <position position="27"/>
    </location>
    <ligand>
        <name>substrate</name>
    </ligand>
</feature>
<feature type="binding site" evidence="1">
    <location>
        <position position="129"/>
    </location>
    <ligand>
        <name>substrate</name>
    </ligand>
</feature>
<feature type="binding site" evidence="1">
    <location>
        <position position="329"/>
    </location>
    <ligand>
        <name>substrate</name>
    </ligand>
</feature>
<comment type="function">
    <text evidence="1">Responsible for synthesis of pseudouridine from uracil-13 in transfer RNAs.</text>
</comment>
<comment type="catalytic activity">
    <reaction evidence="1">
        <text>uridine(13) in tRNA = pseudouridine(13) in tRNA</text>
        <dbReference type="Rhea" id="RHEA:42540"/>
        <dbReference type="Rhea" id="RHEA-COMP:10105"/>
        <dbReference type="Rhea" id="RHEA-COMP:10106"/>
        <dbReference type="ChEBI" id="CHEBI:65314"/>
        <dbReference type="ChEBI" id="CHEBI:65315"/>
        <dbReference type="EC" id="5.4.99.27"/>
    </reaction>
</comment>
<comment type="similarity">
    <text evidence="1">Belongs to the pseudouridine synthase TruD family.</text>
</comment>
<evidence type="ECO:0000255" key="1">
    <source>
        <dbReference type="HAMAP-Rule" id="MF_01082"/>
    </source>
</evidence>
<protein>
    <recommendedName>
        <fullName evidence="1">tRNA pseudouridine synthase D</fullName>
        <ecNumber evidence="1">5.4.99.27</ecNumber>
    </recommendedName>
    <alternativeName>
        <fullName evidence="1">tRNA pseudouridine(13) synthase</fullName>
    </alternativeName>
    <alternativeName>
        <fullName evidence="1">tRNA pseudouridylate synthase D</fullName>
    </alternativeName>
    <alternativeName>
        <fullName evidence="1">tRNA-uridine isomerase D</fullName>
    </alternativeName>
</protein>
<gene>
    <name evidence="1" type="primary">truD</name>
    <name type="ordered locus">EC55989_3017</name>
</gene>
<reference key="1">
    <citation type="journal article" date="2009" name="PLoS Genet.">
        <title>Organised genome dynamics in the Escherichia coli species results in highly diverse adaptive paths.</title>
        <authorList>
            <person name="Touchon M."/>
            <person name="Hoede C."/>
            <person name="Tenaillon O."/>
            <person name="Barbe V."/>
            <person name="Baeriswyl S."/>
            <person name="Bidet P."/>
            <person name="Bingen E."/>
            <person name="Bonacorsi S."/>
            <person name="Bouchier C."/>
            <person name="Bouvet O."/>
            <person name="Calteau A."/>
            <person name="Chiapello H."/>
            <person name="Clermont O."/>
            <person name="Cruveiller S."/>
            <person name="Danchin A."/>
            <person name="Diard M."/>
            <person name="Dossat C."/>
            <person name="Karoui M.E."/>
            <person name="Frapy E."/>
            <person name="Garry L."/>
            <person name="Ghigo J.M."/>
            <person name="Gilles A.M."/>
            <person name="Johnson J."/>
            <person name="Le Bouguenec C."/>
            <person name="Lescat M."/>
            <person name="Mangenot S."/>
            <person name="Martinez-Jehanne V."/>
            <person name="Matic I."/>
            <person name="Nassif X."/>
            <person name="Oztas S."/>
            <person name="Petit M.A."/>
            <person name="Pichon C."/>
            <person name="Rouy Z."/>
            <person name="Ruf C.S."/>
            <person name="Schneider D."/>
            <person name="Tourret J."/>
            <person name="Vacherie B."/>
            <person name="Vallenet D."/>
            <person name="Medigue C."/>
            <person name="Rocha E.P.C."/>
            <person name="Denamur E."/>
        </authorList>
    </citation>
    <scope>NUCLEOTIDE SEQUENCE [LARGE SCALE GENOMIC DNA]</scope>
    <source>
        <strain>55989 / EAEC</strain>
    </source>
</reference>
<proteinExistence type="inferred from homology"/>
<sequence>MIEFDNLTYLHGKPQGTGLLKANPEDFVVVEDLGFEPDGEGEHILVRILKNGCNTRFVADALAKFLKIHAREVSFAGQKDKHAVTEQWLCARVPGKEMPELSAFQLEGCQVLEYARHKRKLRLGALKGNAFTLVLREVSNRDDVEQRLIDICVKGVPNYFGAQRFGIGGSNLQGALRWAQTNTPVRDRNKRSFWLSAARSALFNQIVAERLKKADVNQVVDGDALQLAGRGSWFVATTEELAELQRRVNDKELMITAALPGSGEWGTQREALAFEQAAVAAETELQALLVREKVEAARRAMLLYPQQLSWNWWDDVTVEIRFWLPAGSFATSVVRELINTTGDYAHIAE</sequence>
<organism>
    <name type="scientific">Escherichia coli (strain 55989 / EAEC)</name>
    <dbReference type="NCBI Taxonomy" id="585055"/>
    <lineage>
        <taxon>Bacteria</taxon>
        <taxon>Pseudomonadati</taxon>
        <taxon>Pseudomonadota</taxon>
        <taxon>Gammaproteobacteria</taxon>
        <taxon>Enterobacterales</taxon>
        <taxon>Enterobacteriaceae</taxon>
        <taxon>Escherichia</taxon>
    </lineage>
</organism>
<name>TRUD_ECO55</name>
<dbReference type="EC" id="5.4.99.27" evidence="1"/>
<dbReference type="EMBL" id="CU928145">
    <property type="protein sequence ID" value="CAU98900.1"/>
    <property type="molecule type" value="Genomic_DNA"/>
</dbReference>
<dbReference type="RefSeq" id="WP_000568956.1">
    <property type="nucleotide sequence ID" value="NC_011748.1"/>
</dbReference>
<dbReference type="SMR" id="B7LEG3"/>
<dbReference type="KEGG" id="eck:EC55989_3017"/>
<dbReference type="HOGENOM" id="CLU_005281_4_0_6"/>
<dbReference type="Proteomes" id="UP000000746">
    <property type="component" value="Chromosome"/>
</dbReference>
<dbReference type="GO" id="GO:0005829">
    <property type="term" value="C:cytosol"/>
    <property type="evidence" value="ECO:0007669"/>
    <property type="project" value="TreeGrafter"/>
</dbReference>
<dbReference type="GO" id="GO:0003723">
    <property type="term" value="F:RNA binding"/>
    <property type="evidence" value="ECO:0007669"/>
    <property type="project" value="InterPro"/>
</dbReference>
<dbReference type="GO" id="GO:0160150">
    <property type="term" value="F:tRNA pseudouridine(13) synthase activity"/>
    <property type="evidence" value="ECO:0007669"/>
    <property type="project" value="UniProtKB-EC"/>
</dbReference>
<dbReference type="GO" id="GO:0031119">
    <property type="term" value="P:tRNA pseudouridine synthesis"/>
    <property type="evidence" value="ECO:0007669"/>
    <property type="project" value="UniProtKB-UniRule"/>
</dbReference>
<dbReference type="CDD" id="cd02575">
    <property type="entry name" value="PseudoU_synth_EcTruD"/>
    <property type="match status" value="1"/>
</dbReference>
<dbReference type="FunFam" id="3.30.2340.10:FF:000001">
    <property type="entry name" value="tRNA pseudouridine synthase D"/>
    <property type="match status" value="1"/>
</dbReference>
<dbReference type="FunFam" id="3.30.2350.20:FF:000001">
    <property type="entry name" value="tRNA pseudouridine synthase D"/>
    <property type="match status" value="1"/>
</dbReference>
<dbReference type="Gene3D" id="3.30.2350.20">
    <property type="entry name" value="TruD, catalytic domain"/>
    <property type="match status" value="1"/>
</dbReference>
<dbReference type="Gene3D" id="3.30.2340.10">
    <property type="entry name" value="TruD, insertion domain"/>
    <property type="match status" value="1"/>
</dbReference>
<dbReference type="HAMAP" id="MF_01082">
    <property type="entry name" value="TruD"/>
    <property type="match status" value="1"/>
</dbReference>
<dbReference type="InterPro" id="IPR020103">
    <property type="entry name" value="PsdUridine_synth_cat_dom_sf"/>
</dbReference>
<dbReference type="InterPro" id="IPR001656">
    <property type="entry name" value="PsdUridine_synth_TruD"/>
</dbReference>
<dbReference type="InterPro" id="IPR020119">
    <property type="entry name" value="PsdUridine_synth_TruD_CS"/>
</dbReference>
<dbReference type="InterPro" id="IPR011760">
    <property type="entry name" value="PsdUridine_synth_TruD_insert"/>
</dbReference>
<dbReference type="InterPro" id="IPR042214">
    <property type="entry name" value="TruD_catalytic"/>
</dbReference>
<dbReference type="InterPro" id="IPR043165">
    <property type="entry name" value="TruD_insert_sf"/>
</dbReference>
<dbReference type="InterPro" id="IPR050170">
    <property type="entry name" value="TruD_pseudoU_synthase"/>
</dbReference>
<dbReference type="NCBIfam" id="NF002155">
    <property type="entry name" value="PRK00984.1-4"/>
    <property type="match status" value="1"/>
</dbReference>
<dbReference type="NCBIfam" id="TIGR00094">
    <property type="entry name" value="tRNA_TruD_broad"/>
    <property type="match status" value="1"/>
</dbReference>
<dbReference type="PANTHER" id="PTHR47811">
    <property type="entry name" value="TRNA PSEUDOURIDINE SYNTHASE D"/>
    <property type="match status" value="1"/>
</dbReference>
<dbReference type="PANTHER" id="PTHR47811:SF1">
    <property type="entry name" value="TRNA PSEUDOURIDINE SYNTHASE D"/>
    <property type="match status" value="1"/>
</dbReference>
<dbReference type="Pfam" id="PF01142">
    <property type="entry name" value="TruD"/>
    <property type="match status" value="2"/>
</dbReference>
<dbReference type="SUPFAM" id="SSF55120">
    <property type="entry name" value="Pseudouridine synthase"/>
    <property type="match status" value="1"/>
</dbReference>
<dbReference type="PROSITE" id="PS50984">
    <property type="entry name" value="TRUD"/>
    <property type="match status" value="1"/>
</dbReference>
<dbReference type="PROSITE" id="PS01268">
    <property type="entry name" value="UPF0024"/>
    <property type="match status" value="1"/>
</dbReference>
<accession>B7LEG3</accession>
<keyword id="KW-0413">Isomerase</keyword>
<keyword id="KW-1185">Reference proteome</keyword>
<keyword id="KW-0819">tRNA processing</keyword>